<sequence length="264" mass="29746">MDLRPIGIFDSGVGGLTVLKRLVEVLPGEDYIYFGDTKRVPYGDRSEEEIKKFAKQILNFMREQKVKAVVIACNTTCAVINKSEYDVVLFDVLKAGAESAALYTINKKIGVIATTRTVESKSYEKNIKIIDKNIEVYQKACPEFVPLIEKGLYNSPIAYETASKCLKELKEKDIDTLVLGCTHYPLMASVIEEIMGENVKIVDPAIKLAYDVKDYLLKKDLLNPQIRGKAEFFVSGDKDNFIKTAEMLLGEKIENVLHVDIEKY</sequence>
<dbReference type="EC" id="5.1.1.3" evidence="1"/>
<dbReference type="EMBL" id="CP000923">
    <property type="protein sequence ID" value="ABY91835.1"/>
    <property type="molecule type" value="Genomic_DNA"/>
</dbReference>
<dbReference type="RefSeq" id="WP_009051712.1">
    <property type="nucleotide sequence ID" value="NC_010320.1"/>
</dbReference>
<dbReference type="SMR" id="B0K3R0"/>
<dbReference type="KEGG" id="tex:Teth514_0527"/>
<dbReference type="HOGENOM" id="CLU_052344_0_2_9"/>
<dbReference type="UniPathway" id="UPA00219"/>
<dbReference type="Proteomes" id="UP000002155">
    <property type="component" value="Chromosome"/>
</dbReference>
<dbReference type="GO" id="GO:0008881">
    <property type="term" value="F:glutamate racemase activity"/>
    <property type="evidence" value="ECO:0007669"/>
    <property type="project" value="UniProtKB-UniRule"/>
</dbReference>
<dbReference type="GO" id="GO:0071555">
    <property type="term" value="P:cell wall organization"/>
    <property type="evidence" value="ECO:0007669"/>
    <property type="project" value="UniProtKB-KW"/>
</dbReference>
<dbReference type="GO" id="GO:0009252">
    <property type="term" value="P:peptidoglycan biosynthetic process"/>
    <property type="evidence" value="ECO:0007669"/>
    <property type="project" value="UniProtKB-UniRule"/>
</dbReference>
<dbReference type="GO" id="GO:0008360">
    <property type="term" value="P:regulation of cell shape"/>
    <property type="evidence" value="ECO:0007669"/>
    <property type="project" value="UniProtKB-KW"/>
</dbReference>
<dbReference type="FunFam" id="3.40.50.1860:FF:000001">
    <property type="entry name" value="Glutamate racemase"/>
    <property type="match status" value="1"/>
</dbReference>
<dbReference type="Gene3D" id="3.40.50.1860">
    <property type="match status" value="2"/>
</dbReference>
<dbReference type="HAMAP" id="MF_00258">
    <property type="entry name" value="Glu_racemase"/>
    <property type="match status" value="1"/>
</dbReference>
<dbReference type="InterPro" id="IPR015942">
    <property type="entry name" value="Asp/Glu/hydantoin_racemase"/>
</dbReference>
<dbReference type="InterPro" id="IPR001920">
    <property type="entry name" value="Asp/Glu_race"/>
</dbReference>
<dbReference type="InterPro" id="IPR033134">
    <property type="entry name" value="Asp/Glu_racemase_AS_2"/>
</dbReference>
<dbReference type="InterPro" id="IPR004391">
    <property type="entry name" value="Glu_race"/>
</dbReference>
<dbReference type="NCBIfam" id="TIGR00067">
    <property type="entry name" value="glut_race"/>
    <property type="match status" value="1"/>
</dbReference>
<dbReference type="PANTHER" id="PTHR21198">
    <property type="entry name" value="GLUTAMATE RACEMASE"/>
    <property type="match status" value="1"/>
</dbReference>
<dbReference type="PANTHER" id="PTHR21198:SF2">
    <property type="entry name" value="GLUTAMATE RACEMASE"/>
    <property type="match status" value="1"/>
</dbReference>
<dbReference type="Pfam" id="PF01177">
    <property type="entry name" value="Asp_Glu_race"/>
    <property type="match status" value="1"/>
</dbReference>
<dbReference type="SUPFAM" id="SSF53681">
    <property type="entry name" value="Aspartate/glutamate racemase"/>
    <property type="match status" value="2"/>
</dbReference>
<dbReference type="PROSITE" id="PS00924">
    <property type="entry name" value="ASP_GLU_RACEMASE_2"/>
    <property type="match status" value="1"/>
</dbReference>
<proteinExistence type="inferred from homology"/>
<name>MURI_THEPX</name>
<organism>
    <name type="scientific">Thermoanaerobacter sp. (strain X514)</name>
    <dbReference type="NCBI Taxonomy" id="399726"/>
    <lineage>
        <taxon>Bacteria</taxon>
        <taxon>Bacillati</taxon>
        <taxon>Bacillota</taxon>
        <taxon>Clostridia</taxon>
        <taxon>Thermoanaerobacterales</taxon>
        <taxon>Thermoanaerobacteraceae</taxon>
        <taxon>Thermoanaerobacter</taxon>
    </lineage>
</organism>
<keyword id="KW-0133">Cell shape</keyword>
<keyword id="KW-0961">Cell wall biogenesis/degradation</keyword>
<keyword id="KW-0413">Isomerase</keyword>
<keyword id="KW-0573">Peptidoglycan synthesis</keyword>
<evidence type="ECO:0000255" key="1">
    <source>
        <dbReference type="HAMAP-Rule" id="MF_00258"/>
    </source>
</evidence>
<feature type="chain" id="PRO_1000114072" description="Glutamate racemase">
    <location>
        <begin position="1"/>
        <end position="264"/>
    </location>
</feature>
<feature type="active site" description="Proton donor/acceptor" evidence="1">
    <location>
        <position position="73"/>
    </location>
</feature>
<feature type="active site" description="Proton donor/acceptor" evidence="1">
    <location>
        <position position="181"/>
    </location>
</feature>
<feature type="binding site" evidence="1">
    <location>
        <begin position="10"/>
        <end position="11"/>
    </location>
    <ligand>
        <name>substrate</name>
    </ligand>
</feature>
<feature type="binding site" evidence="1">
    <location>
        <begin position="42"/>
        <end position="43"/>
    </location>
    <ligand>
        <name>substrate</name>
    </ligand>
</feature>
<feature type="binding site" evidence="1">
    <location>
        <begin position="74"/>
        <end position="75"/>
    </location>
    <ligand>
        <name>substrate</name>
    </ligand>
</feature>
<feature type="binding site" evidence="1">
    <location>
        <begin position="182"/>
        <end position="183"/>
    </location>
    <ligand>
        <name>substrate</name>
    </ligand>
</feature>
<protein>
    <recommendedName>
        <fullName evidence="1">Glutamate racemase</fullName>
        <ecNumber evidence="1">5.1.1.3</ecNumber>
    </recommendedName>
</protein>
<gene>
    <name evidence="1" type="primary">murI</name>
    <name type="ordered locus">Teth514_0527</name>
</gene>
<comment type="function">
    <text evidence="1">Provides the (R)-glutamate required for cell wall biosynthesis.</text>
</comment>
<comment type="catalytic activity">
    <reaction evidence="1">
        <text>L-glutamate = D-glutamate</text>
        <dbReference type="Rhea" id="RHEA:12813"/>
        <dbReference type="ChEBI" id="CHEBI:29985"/>
        <dbReference type="ChEBI" id="CHEBI:29986"/>
        <dbReference type="EC" id="5.1.1.3"/>
    </reaction>
</comment>
<comment type="pathway">
    <text evidence="1">Cell wall biogenesis; peptidoglycan biosynthesis.</text>
</comment>
<comment type="similarity">
    <text evidence="1">Belongs to the aspartate/glutamate racemases family.</text>
</comment>
<reference key="1">
    <citation type="submission" date="2008-01" db="EMBL/GenBank/DDBJ databases">
        <title>Complete sequence of Thermoanaerobacter sp. X514.</title>
        <authorList>
            <consortium name="US DOE Joint Genome Institute"/>
            <person name="Copeland A."/>
            <person name="Lucas S."/>
            <person name="Lapidus A."/>
            <person name="Barry K."/>
            <person name="Glavina del Rio T."/>
            <person name="Dalin E."/>
            <person name="Tice H."/>
            <person name="Pitluck S."/>
            <person name="Bruce D."/>
            <person name="Goodwin L."/>
            <person name="Saunders E."/>
            <person name="Brettin T."/>
            <person name="Detter J.C."/>
            <person name="Han C."/>
            <person name="Schmutz J."/>
            <person name="Larimer F."/>
            <person name="Land M."/>
            <person name="Hauser L."/>
            <person name="Kyrpides N."/>
            <person name="Kim E."/>
            <person name="Hemme C."/>
            <person name="Fields M.W."/>
            <person name="He Z."/>
            <person name="Zhou J."/>
            <person name="Richardson P."/>
        </authorList>
    </citation>
    <scope>NUCLEOTIDE SEQUENCE [LARGE SCALE GENOMIC DNA]</scope>
    <source>
        <strain>X514</strain>
    </source>
</reference>
<accession>B0K3R0</accession>